<feature type="chain" id="PRO_0000117404" description="NADH-ubiquinone oxidoreductase chain 1">
    <location>
        <begin position="1"/>
        <end position="318"/>
    </location>
</feature>
<feature type="transmembrane region" description="Helical" evidence="3">
    <location>
        <begin position="2"/>
        <end position="22"/>
    </location>
</feature>
<feature type="transmembrane region" description="Helical" evidence="3">
    <location>
        <begin position="70"/>
        <end position="90"/>
    </location>
</feature>
<feature type="transmembrane region" description="Helical" evidence="3">
    <location>
        <begin position="100"/>
        <end position="120"/>
    </location>
</feature>
<feature type="transmembrane region" description="Helical" evidence="3">
    <location>
        <begin position="147"/>
        <end position="167"/>
    </location>
</feature>
<feature type="transmembrane region" description="Helical" evidence="3">
    <location>
        <begin position="171"/>
        <end position="191"/>
    </location>
</feature>
<feature type="transmembrane region" description="Helical" evidence="3">
    <location>
        <begin position="217"/>
        <end position="237"/>
    </location>
</feature>
<feature type="transmembrane region" description="Helical" evidence="3">
    <location>
        <begin position="254"/>
        <end position="276"/>
    </location>
</feature>
<feature type="transmembrane region" description="Helical" evidence="3">
    <location>
        <begin position="294"/>
        <end position="314"/>
    </location>
</feature>
<keyword id="KW-0249">Electron transport</keyword>
<keyword id="KW-0472">Membrane</keyword>
<keyword id="KW-0496">Mitochondrion</keyword>
<keyword id="KW-0999">Mitochondrion inner membrane</keyword>
<keyword id="KW-0520">NAD</keyword>
<keyword id="KW-1185">Reference proteome</keyword>
<keyword id="KW-0679">Respiratory chain</keyword>
<keyword id="KW-1278">Translocase</keyword>
<keyword id="KW-0812">Transmembrane</keyword>
<keyword id="KW-1133">Transmembrane helix</keyword>
<keyword id="KW-0813">Transport</keyword>
<keyword id="KW-0830">Ubiquinone</keyword>
<name>NU1M_EQUAS</name>
<protein>
    <recommendedName>
        <fullName>NADH-ubiquinone oxidoreductase chain 1</fullName>
        <ecNumber evidence="1">7.1.1.2</ecNumber>
    </recommendedName>
    <alternativeName>
        <fullName>NADH dehydrogenase subunit 1</fullName>
    </alternativeName>
</protein>
<evidence type="ECO:0000250" key="1">
    <source>
        <dbReference type="UniProtKB" id="P03886"/>
    </source>
</evidence>
<evidence type="ECO:0000250" key="2">
    <source>
        <dbReference type="UniProtKB" id="P03887"/>
    </source>
</evidence>
<evidence type="ECO:0000255" key="3"/>
<evidence type="ECO:0000305" key="4"/>
<comment type="function">
    <text evidence="1">Core subunit of the mitochondrial membrane respiratory chain NADH dehydrogenase (Complex I) which catalyzes electron transfer from NADH through the respiratory chain, using ubiquinone as an electron acceptor. Essential for the catalytic activity and assembly of complex I.</text>
</comment>
<comment type="catalytic activity">
    <reaction evidence="1">
        <text>a ubiquinone + NADH + 5 H(+)(in) = a ubiquinol + NAD(+) + 4 H(+)(out)</text>
        <dbReference type="Rhea" id="RHEA:29091"/>
        <dbReference type="Rhea" id="RHEA-COMP:9565"/>
        <dbReference type="Rhea" id="RHEA-COMP:9566"/>
        <dbReference type="ChEBI" id="CHEBI:15378"/>
        <dbReference type="ChEBI" id="CHEBI:16389"/>
        <dbReference type="ChEBI" id="CHEBI:17976"/>
        <dbReference type="ChEBI" id="CHEBI:57540"/>
        <dbReference type="ChEBI" id="CHEBI:57945"/>
        <dbReference type="EC" id="7.1.1.2"/>
    </reaction>
</comment>
<comment type="subunit">
    <text evidence="2">Core subunit of respiratory chain NADH dehydrogenase (Complex I) which is composed of 45 different subunits.</text>
</comment>
<comment type="subcellular location">
    <subcellularLocation>
        <location evidence="2">Mitochondrion inner membrane</location>
        <topology evidence="3">Multi-pass membrane protein</topology>
    </subcellularLocation>
</comment>
<comment type="similarity">
    <text evidence="4">Belongs to the complex I subunit 1 family.</text>
</comment>
<geneLocation type="mitochondrion"/>
<accession>P92475</accession>
<proteinExistence type="inferred from homology"/>
<dbReference type="EC" id="7.1.1.2" evidence="1"/>
<dbReference type="EMBL" id="X97337">
    <property type="protein sequence ID" value="CAA66014.1"/>
    <property type="molecule type" value="Genomic_DNA"/>
</dbReference>
<dbReference type="PIR" id="T11363">
    <property type="entry name" value="T11363"/>
</dbReference>
<dbReference type="RefSeq" id="NP_007381.1">
    <property type="nucleotide sequence ID" value="NC_001788.1"/>
</dbReference>
<dbReference type="SMR" id="P92475"/>
<dbReference type="GeneID" id="808061"/>
<dbReference type="KEGG" id="eai:808061"/>
<dbReference type="CTD" id="4535"/>
<dbReference type="Proteomes" id="UP000694387">
    <property type="component" value="Mitochondrion MT"/>
</dbReference>
<dbReference type="GO" id="GO:0005743">
    <property type="term" value="C:mitochondrial inner membrane"/>
    <property type="evidence" value="ECO:0000250"/>
    <property type="project" value="UniProtKB"/>
</dbReference>
<dbReference type="GO" id="GO:0008137">
    <property type="term" value="F:NADH dehydrogenase (ubiquinone) activity"/>
    <property type="evidence" value="ECO:0000250"/>
    <property type="project" value="UniProtKB"/>
</dbReference>
<dbReference type="GO" id="GO:0006120">
    <property type="term" value="P:mitochondrial electron transport, NADH to ubiquinone"/>
    <property type="evidence" value="ECO:0000250"/>
    <property type="project" value="UniProtKB"/>
</dbReference>
<dbReference type="GO" id="GO:0032981">
    <property type="term" value="P:mitochondrial respiratory chain complex I assembly"/>
    <property type="evidence" value="ECO:0000250"/>
    <property type="project" value="UniProtKB"/>
</dbReference>
<dbReference type="HAMAP" id="MF_01350">
    <property type="entry name" value="NDH1_NuoH"/>
    <property type="match status" value="1"/>
</dbReference>
<dbReference type="InterPro" id="IPR001694">
    <property type="entry name" value="NADH_UbQ_OxRdtase_su1/FPO"/>
</dbReference>
<dbReference type="InterPro" id="IPR018086">
    <property type="entry name" value="NADH_UbQ_OxRdtase_su1_CS"/>
</dbReference>
<dbReference type="PANTHER" id="PTHR11432">
    <property type="entry name" value="NADH DEHYDROGENASE SUBUNIT 1"/>
    <property type="match status" value="1"/>
</dbReference>
<dbReference type="PANTHER" id="PTHR11432:SF3">
    <property type="entry name" value="NADH-UBIQUINONE OXIDOREDUCTASE CHAIN 1"/>
    <property type="match status" value="1"/>
</dbReference>
<dbReference type="Pfam" id="PF00146">
    <property type="entry name" value="NADHdh"/>
    <property type="match status" value="1"/>
</dbReference>
<dbReference type="PROSITE" id="PS00667">
    <property type="entry name" value="COMPLEX1_ND1_1"/>
    <property type="match status" value="1"/>
</dbReference>
<dbReference type="PROSITE" id="PS00668">
    <property type="entry name" value="COMPLEX1_ND1_2"/>
    <property type="match status" value="1"/>
</dbReference>
<gene>
    <name type="primary">MT-ND1</name>
    <name type="synonym">MTND1</name>
    <name type="synonym">NADH1</name>
    <name type="synonym">ND1</name>
</gene>
<sequence>MFMINVLLLIIPILLAVAFLTLVERKILGYMQLRKGPNIVGPYGLLQPIADALKLFIKEPLQPLTSSTSMFIIAPILALTLALTMWIPLPMPYPLINMNLGILFMLAMSSLAVYSILWSGWASNSKYALIGALRAVAQTISYEVTLAIILLSVLLMSGSFTLSTLIITQEYLWLIFPSWPLAMMWFISTLAETNRAPFDLTEGESELVSGFNVEYAAGPFALFFLAEYANIIMMNIFTTTLFLGAFHSPYLPELYSINFTMKTLLLTCSFLWIRASYPRFRYDQLMHLLWKNFLPLTLALCMWHVSLPIMLSSIPPQT</sequence>
<organism>
    <name type="scientific">Equus asinus</name>
    <name type="common">Donkey</name>
    <name type="synonym">Equus africanus asinus</name>
    <dbReference type="NCBI Taxonomy" id="9793"/>
    <lineage>
        <taxon>Eukaryota</taxon>
        <taxon>Metazoa</taxon>
        <taxon>Chordata</taxon>
        <taxon>Craniata</taxon>
        <taxon>Vertebrata</taxon>
        <taxon>Euteleostomi</taxon>
        <taxon>Mammalia</taxon>
        <taxon>Eutheria</taxon>
        <taxon>Laurasiatheria</taxon>
        <taxon>Perissodactyla</taxon>
        <taxon>Equidae</taxon>
        <taxon>Equus</taxon>
    </lineage>
</organism>
<reference key="1">
    <citation type="journal article" date="1996" name="J. Mol. Evol.">
        <title>The complete mitochondrial DNA (mtDNA) of the donkey and mtDNA comparisons among four closely related mammalian species-pairs.</title>
        <authorList>
            <person name="Xu X."/>
            <person name="Gullberg A."/>
            <person name="Arnason U."/>
        </authorList>
    </citation>
    <scope>NUCLEOTIDE SEQUENCE [GENOMIC DNA]</scope>
    <source>
        <tissue>Kidney</tissue>
    </source>
</reference>